<accession>Q1QX82</accession>
<proteinExistence type="inferred from homology"/>
<gene>
    <name evidence="1" type="primary">nqrE</name>
    <name type="ordered locus">Csal_1573</name>
</gene>
<sequence>MFEHYLSLFVKAVFVENMALAFFLGMCTFLAVSKKISSAIGLGIAVVVVLTITVPVNNLILTYLLSEGALTWTGLEGASNIDLSFLGLLSYIGVIAALVQILEMFLDKFVPALYNALGVFLPLITVNCAILGASLFMVERSYDFGESVIYGAGAGVGWALAITALAGIREKLKYSDVPASLQGLGITFITVGLMSLGFMSFSGIQL</sequence>
<organism>
    <name type="scientific">Chromohalobacter salexigens (strain ATCC BAA-138 / DSM 3043 / CIP 106854 / NCIMB 13768 / 1H11)</name>
    <dbReference type="NCBI Taxonomy" id="290398"/>
    <lineage>
        <taxon>Bacteria</taxon>
        <taxon>Pseudomonadati</taxon>
        <taxon>Pseudomonadota</taxon>
        <taxon>Gammaproteobacteria</taxon>
        <taxon>Oceanospirillales</taxon>
        <taxon>Halomonadaceae</taxon>
        <taxon>Chromohalobacter</taxon>
    </lineage>
</organism>
<reference key="1">
    <citation type="journal article" date="2011" name="Stand. Genomic Sci.">
        <title>Complete genome sequence of the halophilic and highly halotolerant Chromohalobacter salexigens type strain (1H11(T)).</title>
        <authorList>
            <person name="Copeland A."/>
            <person name="O'Connor K."/>
            <person name="Lucas S."/>
            <person name="Lapidus A."/>
            <person name="Berry K.W."/>
            <person name="Detter J.C."/>
            <person name="Del Rio T.G."/>
            <person name="Hammon N."/>
            <person name="Dalin E."/>
            <person name="Tice H."/>
            <person name="Pitluck S."/>
            <person name="Bruce D."/>
            <person name="Goodwin L."/>
            <person name="Han C."/>
            <person name="Tapia R."/>
            <person name="Saunders E."/>
            <person name="Schmutz J."/>
            <person name="Brettin T."/>
            <person name="Larimer F."/>
            <person name="Land M."/>
            <person name="Hauser L."/>
            <person name="Vargas C."/>
            <person name="Nieto J.J."/>
            <person name="Kyrpides N.C."/>
            <person name="Ivanova N."/>
            <person name="Goker M."/>
            <person name="Klenk H.P."/>
            <person name="Csonka L.N."/>
            <person name="Woyke T."/>
        </authorList>
    </citation>
    <scope>NUCLEOTIDE SEQUENCE [LARGE SCALE GENOMIC DNA]</scope>
    <source>
        <strain>ATCC BAA-138 / DSM 3043 / CIP 106854 / NCIMB 13768 / 1H11</strain>
    </source>
</reference>
<dbReference type="EC" id="7.2.1.1" evidence="1"/>
<dbReference type="EMBL" id="CP000285">
    <property type="protein sequence ID" value="ABE58926.1"/>
    <property type="molecule type" value="Genomic_DNA"/>
</dbReference>
<dbReference type="RefSeq" id="WP_011506872.1">
    <property type="nucleotide sequence ID" value="NC_007963.1"/>
</dbReference>
<dbReference type="SMR" id="Q1QX82"/>
<dbReference type="STRING" id="290398.Csal_1573"/>
<dbReference type="GeneID" id="95334304"/>
<dbReference type="KEGG" id="csa:Csal_1573"/>
<dbReference type="eggNOG" id="COG2209">
    <property type="taxonomic scope" value="Bacteria"/>
</dbReference>
<dbReference type="HOGENOM" id="CLU_095255_0_0_6"/>
<dbReference type="OrthoDB" id="9803631at2"/>
<dbReference type="Proteomes" id="UP000000239">
    <property type="component" value="Chromosome"/>
</dbReference>
<dbReference type="GO" id="GO:0009276">
    <property type="term" value="C:Gram-negative-bacterium-type cell wall"/>
    <property type="evidence" value="ECO:0007669"/>
    <property type="project" value="InterPro"/>
</dbReference>
<dbReference type="GO" id="GO:0005886">
    <property type="term" value="C:plasma membrane"/>
    <property type="evidence" value="ECO:0007669"/>
    <property type="project" value="UniProtKB-SubCell"/>
</dbReference>
<dbReference type="GO" id="GO:0016655">
    <property type="term" value="F:oxidoreductase activity, acting on NAD(P)H, quinone or similar compound as acceptor"/>
    <property type="evidence" value="ECO:0007669"/>
    <property type="project" value="UniProtKB-UniRule"/>
</dbReference>
<dbReference type="GO" id="GO:0022904">
    <property type="term" value="P:respiratory electron transport chain"/>
    <property type="evidence" value="ECO:0007669"/>
    <property type="project" value="InterPro"/>
</dbReference>
<dbReference type="GO" id="GO:0006814">
    <property type="term" value="P:sodium ion transport"/>
    <property type="evidence" value="ECO:0007669"/>
    <property type="project" value="UniProtKB-UniRule"/>
</dbReference>
<dbReference type="HAMAP" id="MF_00429">
    <property type="entry name" value="NqrE"/>
    <property type="match status" value="1"/>
</dbReference>
<dbReference type="InterPro" id="IPR003667">
    <property type="entry name" value="NqrDE/RnfAE"/>
</dbReference>
<dbReference type="InterPro" id="IPR050133">
    <property type="entry name" value="NqrDE/RnfAE_oxidrdctase"/>
</dbReference>
<dbReference type="InterPro" id="IPR010967">
    <property type="entry name" value="NqrE"/>
</dbReference>
<dbReference type="NCBIfam" id="TIGR01940">
    <property type="entry name" value="nqrE"/>
    <property type="match status" value="1"/>
</dbReference>
<dbReference type="PANTHER" id="PTHR30335">
    <property type="entry name" value="INTEGRAL MEMBRANE PROTEIN OF SOXR-REDUCING COMPLEX"/>
    <property type="match status" value="1"/>
</dbReference>
<dbReference type="PANTHER" id="PTHR30335:SF1">
    <property type="entry name" value="NA(+)-TRANSLOCATING NADH-QUINONE REDUCTASE SUBUNIT E"/>
    <property type="match status" value="1"/>
</dbReference>
<dbReference type="Pfam" id="PF02508">
    <property type="entry name" value="Rnf-Nqr"/>
    <property type="match status" value="1"/>
</dbReference>
<dbReference type="PIRSF" id="PIRSF006102">
    <property type="entry name" value="NQR_DE"/>
    <property type="match status" value="1"/>
</dbReference>
<name>NQRE_CHRSD</name>
<keyword id="KW-0997">Cell inner membrane</keyword>
<keyword id="KW-1003">Cell membrane</keyword>
<keyword id="KW-0406">Ion transport</keyword>
<keyword id="KW-0472">Membrane</keyword>
<keyword id="KW-0520">NAD</keyword>
<keyword id="KW-1185">Reference proteome</keyword>
<keyword id="KW-0915">Sodium</keyword>
<keyword id="KW-0739">Sodium transport</keyword>
<keyword id="KW-1278">Translocase</keyword>
<keyword id="KW-0812">Transmembrane</keyword>
<keyword id="KW-1133">Transmembrane helix</keyword>
<keyword id="KW-0813">Transport</keyword>
<keyword id="KW-0830">Ubiquinone</keyword>
<protein>
    <recommendedName>
        <fullName evidence="1">Na(+)-translocating NADH-quinone reductase subunit E</fullName>
        <shortName evidence="1">Na(+)-NQR subunit E</shortName>
        <shortName evidence="1">Na(+)-translocating NQR subunit E</shortName>
        <ecNumber evidence="1">7.2.1.1</ecNumber>
    </recommendedName>
    <alternativeName>
        <fullName evidence="1">NQR complex subunit E</fullName>
    </alternativeName>
    <alternativeName>
        <fullName evidence="1">NQR-1 subunit E</fullName>
    </alternativeName>
</protein>
<feature type="chain" id="PRO_1000060188" description="Na(+)-translocating NADH-quinone reductase subunit E">
    <location>
        <begin position="1"/>
        <end position="206"/>
    </location>
</feature>
<feature type="transmembrane region" description="Helical" evidence="1">
    <location>
        <begin position="12"/>
        <end position="32"/>
    </location>
</feature>
<feature type="transmembrane region" description="Helical" evidence="1">
    <location>
        <begin position="36"/>
        <end position="56"/>
    </location>
</feature>
<feature type="transmembrane region" description="Helical" evidence="1">
    <location>
        <begin position="85"/>
        <end position="105"/>
    </location>
</feature>
<feature type="transmembrane region" description="Helical" evidence="1">
    <location>
        <begin position="118"/>
        <end position="138"/>
    </location>
</feature>
<feature type="transmembrane region" description="Helical" evidence="1">
    <location>
        <begin position="148"/>
        <end position="168"/>
    </location>
</feature>
<feature type="transmembrane region" description="Helical" evidence="1">
    <location>
        <begin position="184"/>
        <end position="204"/>
    </location>
</feature>
<comment type="function">
    <text evidence="1">NQR complex catalyzes the reduction of ubiquinone-1 to ubiquinol by two successive reactions, coupled with the transport of Na(+) ions from the cytoplasm to the periplasm. NqrA to NqrE are probably involved in the second step, the conversion of ubisemiquinone to ubiquinol.</text>
</comment>
<comment type="catalytic activity">
    <reaction evidence="1">
        <text>a ubiquinone + n Na(+)(in) + NADH + H(+) = a ubiquinol + n Na(+)(out) + NAD(+)</text>
        <dbReference type="Rhea" id="RHEA:47748"/>
        <dbReference type="Rhea" id="RHEA-COMP:9565"/>
        <dbReference type="Rhea" id="RHEA-COMP:9566"/>
        <dbReference type="ChEBI" id="CHEBI:15378"/>
        <dbReference type="ChEBI" id="CHEBI:16389"/>
        <dbReference type="ChEBI" id="CHEBI:17976"/>
        <dbReference type="ChEBI" id="CHEBI:29101"/>
        <dbReference type="ChEBI" id="CHEBI:57540"/>
        <dbReference type="ChEBI" id="CHEBI:57945"/>
        <dbReference type="EC" id="7.2.1.1"/>
    </reaction>
</comment>
<comment type="subunit">
    <text evidence="1">Composed of six subunits; NqrA, NqrB, NqrC, NqrD, NqrE and NqrF.</text>
</comment>
<comment type="subcellular location">
    <subcellularLocation>
        <location evidence="1">Cell inner membrane</location>
        <topology evidence="1">Multi-pass membrane protein</topology>
    </subcellularLocation>
</comment>
<comment type="similarity">
    <text evidence="1">Belongs to the NqrDE/RnfAE family.</text>
</comment>
<evidence type="ECO:0000255" key="1">
    <source>
        <dbReference type="HAMAP-Rule" id="MF_00429"/>
    </source>
</evidence>